<organism>
    <name type="scientific">Granulibacter bethesdensis (strain ATCC BAA-1260 / CGDNIH1)</name>
    <dbReference type="NCBI Taxonomy" id="391165"/>
    <lineage>
        <taxon>Bacteria</taxon>
        <taxon>Pseudomonadati</taxon>
        <taxon>Pseudomonadota</taxon>
        <taxon>Alphaproteobacteria</taxon>
        <taxon>Acetobacterales</taxon>
        <taxon>Acetobacteraceae</taxon>
        <taxon>Granulibacter</taxon>
    </lineage>
</organism>
<name>URED_GRABC</name>
<dbReference type="EMBL" id="CP000394">
    <property type="protein sequence ID" value="ABI63059.1"/>
    <property type="molecule type" value="Genomic_DNA"/>
</dbReference>
<dbReference type="SMR" id="Q0BQ43"/>
<dbReference type="STRING" id="391165.GbCGDNIH1_2161"/>
<dbReference type="KEGG" id="gbe:GbCGDNIH1_2161"/>
<dbReference type="eggNOG" id="COG0829">
    <property type="taxonomic scope" value="Bacteria"/>
</dbReference>
<dbReference type="HOGENOM" id="CLU_056339_0_0_5"/>
<dbReference type="OrthoDB" id="9798842at2"/>
<dbReference type="Proteomes" id="UP000001963">
    <property type="component" value="Chromosome"/>
</dbReference>
<dbReference type="GO" id="GO:0005737">
    <property type="term" value="C:cytoplasm"/>
    <property type="evidence" value="ECO:0007669"/>
    <property type="project" value="UniProtKB-SubCell"/>
</dbReference>
<dbReference type="GO" id="GO:0016151">
    <property type="term" value="F:nickel cation binding"/>
    <property type="evidence" value="ECO:0007669"/>
    <property type="project" value="UniProtKB-UniRule"/>
</dbReference>
<dbReference type="HAMAP" id="MF_01384">
    <property type="entry name" value="UreD"/>
    <property type="match status" value="1"/>
</dbReference>
<dbReference type="InterPro" id="IPR002669">
    <property type="entry name" value="UreD"/>
</dbReference>
<dbReference type="PANTHER" id="PTHR33643">
    <property type="entry name" value="UREASE ACCESSORY PROTEIN D"/>
    <property type="match status" value="1"/>
</dbReference>
<dbReference type="PANTHER" id="PTHR33643:SF1">
    <property type="entry name" value="UREASE ACCESSORY PROTEIN D"/>
    <property type="match status" value="1"/>
</dbReference>
<dbReference type="Pfam" id="PF01774">
    <property type="entry name" value="UreD"/>
    <property type="match status" value="1"/>
</dbReference>
<sequence>MLMPMPEPDEAPVAALVNIAGGLAGGDRLSFTMTLDAQARATLCTAAAEKVYRSLGPDTDISNILTAGPEAALEWLPQETILFNGARLRRRMNVSLATDARLLATETIIFGRTAHQETFLNGHFSDHWRLWRDGKLLWADNFRLPDPPARVLDHPFGLNRHPAMATIVLAATDAAAYRDLLREKWQDETGKGVTVPRPGLLLGRLIGSATAVRQGVEEAMIILRTHAMHGPARLPRLWLS</sequence>
<keyword id="KW-0143">Chaperone</keyword>
<keyword id="KW-0963">Cytoplasm</keyword>
<keyword id="KW-0996">Nickel insertion</keyword>
<keyword id="KW-1185">Reference proteome</keyword>
<gene>
    <name evidence="1" type="primary">ureD</name>
    <name type="ordered locus">GbCGDNIH1_2161</name>
</gene>
<accession>Q0BQ43</accession>
<comment type="function">
    <text evidence="1">Required for maturation of urease via the functional incorporation of the urease nickel metallocenter.</text>
</comment>
<comment type="subunit">
    <text evidence="1">UreD, UreF and UreG form a complex that acts as a GTP-hydrolysis-dependent molecular chaperone, activating the urease apoprotein by helping to assemble the nickel containing metallocenter of UreC. The UreE protein probably delivers the nickel.</text>
</comment>
<comment type="subcellular location">
    <subcellularLocation>
        <location evidence="1">Cytoplasm</location>
    </subcellularLocation>
</comment>
<comment type="similarity">
    <text evidence="1">Belongs to the UreD family.</text>
</comment>
<evidence type="ECO:0000255" key="1">
    <source>
        <dbReference type="HAMAP-Rule" id="MF_01384"/>
    </source>
</evidence>
<proteinExistence type="inferred from homology"/>
<reference key="1">
    <citation type="journal article" date="2007" name="J. Bacteriol.">
        <title>Genome sequence analysis of the emerging human pathogenic acetic acid bacterium Granulibacter bethesdensis.</title>
        <authorList>
            <person name="Greenberg D.E."/>
            <person name="Porcella S.F."/>
            <person name="Zelazny A.M."/>
            <person name="Virtaneva K."/>
            <person name="Sturdevant D.E."/>
            <person name="Kupko J.J. III"/>
            <person name="Barbian K.D."/>
            <person name="Babar A."/>
            <person name="Dorward D.W."/>
            <person name="Holland S.M."/>
        </authorList>
    </citation>
    <scope>NUCLEOTIDE SEQUENCE [LARGE SCALE GENOMIC DNA]</scope>
    <source>
        <strain>ATCC BAA-1260 / CGDNIH1</strain>
    </source>
</reference>
<feature type="chain" id="PRO_0000340454" description="Urease accessory protein UreD">
    <location>
        <begin position="1"/>
        <end position="240"/>
    </location>
</feature>
<protein>
    <recommendedName>
        <fullName evidence="1">Urease accessory protein UreD</fullName>
    </recommendedName>
</protein>